<proteinExistence type="inferred from homology"/>
<sequence length="96" mass="10429">MSAVTVNDDGLVLRLYIQPKASRDSIVGLHGDEVKVAITAPPVDGQANSHLVKFLGKQFRVAKSQVVIEKGELGRHKQIKIINPQQIPPEIAALIN</sequence>
<protein>
    <recommendedName>
        <fullName evidence="1">UPF0235 protein YggU</fullName>
    </recommendedName>
</protein>
<dbReference type="EMBL" id="CU928145">
    <property type="protein sequence ID" value="CAU99245.1"/>
    <property type="molecule type" value="Genomic_DNA"/>
</dbReference>
<dbReference type="RefSeq" id="WP_001277222.1">
    <property type="nucleotide sequence ID" value="NC_011748.1"/>
</dbReference>
<dbReference type="SMR" id="B7LFL6"/>
<dbReference type="GeneID" id="86861043"/>
<dbReference type="KEGG" id="eck:EC55989_3246"/>
<dbReference type="HOGENOM" id="CLU_130694_5_0_6"/>
<dbReference type="Proteomes" id="UP000000746">
    <property type="component" value="Chromosome"/>
</dbReference>
<dbReference type="GO" id="GO:0005737">
    <property type="term" value="C:cytoplasm"/>
    <property type="evidence" value="ECO:0007669"/>
    <property type="project" value="TreeGrafter"/>
</dbReference>
<dbReference type="Gene3D" id="3.30.1200.10">
    <property type="entry name" value="YggU-like"/>
    <property type="match status" value="1"/>
</dbReference>
<dbReference type="HAMAP" id="MF_00634">
    <property type="entry name" value="UPF0235"/>
    <property type="match status" value="1"/>
</dbReference>
<dbReference type="InterPro" id="IPR003746">
    <property type="entry name" value="DUF167"/>
</dbReference>
<dbReference type="InterPro" id="IPR036591">
    <property type="entry name" value="YggU-like_sf"/>
</dbReference>
<dbReference type="NCBIfam" id="TIGR00251">
    <property type="entry name" value="DUF167 family protein"/>
    <property type="match status" value="1"/>
</dbReference>
<dbReference type="NCBIfam" id="NF003466">
    <property type="entry name" value="PRK05090.1"/>
    <property type="match status" value="1"/>
</dbReference>
<dbReference type="PANTHER" id="PTHR13420">
    <property type="entry name" value="UPF0235 PROTEIN C15ORF40"/>
    <property type="match status" value="1"/>
</dbReference>
<dbReference type="PANTHER" id="PTHR13420:SF7">
    <property type="entry name" value="UPF0235 PROTEIN C15ORF40"/>
    <property type="match status" value="1"/>
</dbReference>
<dbReference type="Pfam" id="PF02594">
    <property type="entry name" value="DUF167"/>
    <property type="match status" value="1"/>
</dbReference>
<dbReference type="SMART" id="SM01152">
    <property type="entry name" value="DUF167"/>
    <property type="match status" value="1"/>
</dbReference>
<dbReference type="SUPFAM" id="SSF69786">
    <property type="entry name" value="YggU-like"/>
    <property type="match status" value="1"/>
</dbReference>
<organism>
    <name type="scientific">Escherichia coli (strain 55989 / EAEC)</name>
    <dbReference type="NCBI Taxonomy" id="585055"/>
    <lineage>
        <taxon>Bacteria</taxon>
        <taxon>Pseudomonadati</taxon>
        <taxon>Pseudomonadota</taxon>
        <taxon>Gammaproteobacteria</taxon>
        <taxon>Enterobacterales</taxon>
        <taxon>Enterobacteriaceae</taxon>
        <taxon>Escherichia</taxon>
    </lineage>
</organism>
<keyword id="KW-1185">Reference proteome</keyword>
<gene>
    <name evidence="1" type="primary">yggU</name>
    <name type="ordered locus">EC55989_3246</name>
</gene>
<evidence type="ECO:0000255" key="1">
    <source>
        <dbReference type="HAMAP-Rule" id="MF_00634"/>
    </source>
</evidence>
<feature type="chain" id="PRO_1000147341" description="UPF0235 protein YggU">
    <location>
        <begin position="1"/>
        <end position="96"/>
    </location>
</feature>
<name>YGGU_ECO55</name>
<reference key="1">
    <citation type="journal article" date="2009" name="PLoS Genet.">
        <title>Organised genome dynamics in the Escherichia coli species results in highly diverse adaptive paths.</title>
        <authorList>
            <person name="Touchon M."/>
            <person name="Hoede C."/>
            <person name="Tenaillon O."/>
            <person name="Barbe V."/>
            <person name="Baeriswyl S."/>
            <person name="Bidet P."/>
            <person name="Bingen E."/>
            <person name="Bonacorsi S."/>
            <person name="Bouchier C."/>
            <person name="Bouvet O."/>
            <person name="Calteau A."/>
            <person name="Chiapello H."/>
            <person name="Clermont O."/>
            <person name="Cruveiller S."/>
            <person name="Danchin A."/>
            <person name="Diard M."/>
            <person name="Dossat C."/>
            <person name="Karoui M.E."/>
            <person name="Frapy E."/>
            <person name="Garry L."/>
            <person name="Ghigo J.M."/>
            <person name="Gilles A.M."/>
            <person name="Johnson J."/>
            <person name="Le Bouguenec C."/>
            <person name="Lescat M."/>
            <person name="Mangenot S."/>
            <person name="Martinez-Jehanne V."/>
            <person name="Matic I."/>
            <person name="Nassif X."/>
            <person name="Oztas S."/>
            <person name="Petit M.A."/>
            <person name="Pichon C."/>
            <person name="Rouy Z."/>
            <person name="Ruf C.S."/>
            <person name="Schneider D."/>
            <person name="Tourret J."/>
            <person name="Vacherie B."/>
            <person name="Vallenet D."/>
            <person name="Medigue C."/>
            <person name="Rocha E.P.C."/>
            <person name="Denamur E."/>
        </authorList>
    </citation>
    <scope>NUCLEOTIDE SEQUENCE [LARGE SCALE GENOMIC DNA]</scope>
    <source>
        <strain>55989 / EAEC</strain>
    </source>
</reference>
<comment type="similarity">
    <text evidence="1">Belongs to the UPF0235 family.</text>
</comment>
<accession>B7LFL6</accession>